<accession>P10294</accession>
<keyword id="KW-0903">Direct protein sequencing</keyword>
<keyword id="KW-1015">Disulfide bond</keyword>
<keyword id="KW-0960">Knottin</keyword>
<keyword id="KW-0646">Protease inhibitor</keyword>
<keyword id="KW-1185">Reference proteome</keyword>
<keyword id="KW-0964">Secreted</keyword>
<keyword id="KW-0722">Serine protease inhibitor</keyword>
<dbReference type="PIR" id="JX0057">
    <property type="entry name" value="JX0057"/>
</dbReference>
<dbReference type="SMR" id="P10294"/>
<dbReference type="MEROPS" id="I07.001"/>
<dbReference type="Proteomes" id="UP000504603">
    <property type="component" value="Unplaced"/>
</dbReference>
<dbReference type="GO" id="GO:0005576">
    <property type="term" value="C:extracellular region"/>
    <property type="evidence" value="ECO:0007669"/>
    <property type="project" value="UniProtKB-SubCell"/>
</dbReference>
<dbReference type="GO" id="GO:0004867">
    <property type="term" value="F:serine-type endopeptidase inhibitor activity"/>
    <property type="evidence" value="ECO:0007669"/>
    <property type="project" value="UniProtKB-KW"/>
</dbReference>
<dbReference type="CDD" id="cd00150">
    <property type="entry name" value="PlantTI"/>
    <property type="match status" value="1"/>
</dbReference>
<dbReference type="Gene3D" id="4.10.75.20">
    <property type="match status" value="1"/>
</dbReference>
<dbReference type="InterPro" id="IPR000737">
    <property type="entry name" value="Prot_inh_squash"/>
</dbReference>
<dbReference type="InterPro" id="IPR011052">
    <property type="entry name" value="Proteinase_amylase_inhib_sf"/>
</dbReference>
<dbReference type="Pfam" id="PF00299">
    <property type="entry name" value="Squash"/>
    <property type="match status" value="1"/>
</dbReference>
<dbReference type="SMART" id="SM00286">
    <property type="entry name" value="PTI"/>
    <property type="match status" value="1"/>
</dbReference>
<dbReference type="SUPFAM" id="SSF57027">
    <property type="entry name" value="Plant inhibitors of proteinases and amylases"/>
    <property type="match status" value="1"/>
</dbReference>
<dbReference type="PROSITE" id="PS00286">
    <property type="entry name" value="SQUASH_INHIBITOR"/>
    <property type="match status" value="1"/>
</dbReference>
<evidence type="ECO:0000250" key="1"/>
<evidence type="ECO:0000305" key="2"/>
<organism>
    <name type="scientific">Momordica charantia</name>
    <name type="common">Bitter gourd</name>
    <name type="synonym">Balsam pear</name>
    <dbReference type="NCBI Taxonomy" id="3673"/>
    <lineage>
        <taxon>Eukaryota</taxon>
        <taxon>Viridiplantae</taxon>
        <taxon>Streptophyta</taxon>
        <taxon>Embryophyta</taxon>
        <taxon>Tracheophyta</taxon>
        <taxon>Spermatophyta</taxon>
        <taxon>Magnoliopsida</taxon>
        <taxon>eudicotyledons</taxon>
        <taxon>Gunneridae</taxon>
        <taxon>Pentapetalae</taxon>
        <taxon>rosids</taxon>
        <taxon>fabids</taxon>
        <taxon>Cucurbitales</taxon>
        <taxon>Cucurbitaceae</taxon>
        <taxon>Momordiceae</taxon>
        <taxon>Momordica</taxon>
    </lineage>
</organism>
<comment type="function">
    <text>Inhibits trypsin.</text>
</comment>
<comment type="subcellular location">
    <subcellularLocation>
        <location>Secreted</location>
    </subcellularLocation>
</comment>
<comment type="domain">
    <text evidence="1">The presence of a 'disulfide through disulfide knot' structurally defines this protein as a knottin.</text>
</comment>
<comment type="similarity">
    <text evidence="2">Belongs to the protease inhibitor I7 (squash-type serine protease inhibitor) family.</text>
</comment>
<feature type="peptide" id="PRO_0000044386" description="Trypsin inhibitor 1">
    <location>
        <begin position="1"/>
        <end position="30"/>
    </location>
</feature>
<feature type="site" description="Reactive bond">
    <location>
        <begin position="6"/>
        <end position="7"/>
    </location>
</feature>
<feature type="disulfide bond" evidence="1">
    <location>
        <begin position="4"/>
        <end position="21"/>
    </location>
</feature>
<feature type="disulfide bond" evidence="1">
    <location>
        <begin position="11"/>
        <end position="23"/>
    </location>
</feature>
<feature type="disulfide bond" evidence="1">
    <location>
        <begin position="17"/>
        <end position="29"/>
    </location>
</feature>
<sequence>ERRCPRILKQCKRDSDCPGECICMAHGFCG</sequence>
<proteinExistence type="evidence at protein level"/>
<reference key="1">
    <citation type="journal article" date="1989" name="J. Biochem.">
        <title>Amino acid sequences and disulfide bridges of serine proteinase inhibitors from bitter gourd (Momordica charantia LINN.) seeds.</title>
        <authorList>
            <person name="Hara S."/>
            <person name="Makino J."/>
            <person name="Ikenaka T."/>
        </authorList>
    </citation>
    <scope>PROTEIN SEQUENCE</scope>
    <source>
        <tissue>Seed</tissue>
    </source>
</reference>
<name>ITR1_MOMCH</name>
<protein>
    <recommendedName>
        <fullName>Trypsin inhibitor 1</fullName>
    </recommendedName>
    <alternativeName>
        <fullName>MCTI-I</fullName>
    </alternativeName>
    <alternativeName>
        <fullName>Trypsin inhibitor I</fullName>
    </alternativeName>
</protein>